<protein>
    <recommendedName>
        <fullName evidence="2">Putative carbamoyltransferase YgeW</fullName>
        <ecNumber evidence="2">2.1.3.-</ecNumber>
    </recommendedName>
</protein>
<feature type="chain" id="PRO_0000113264" description="Putative carbamoyltransferase YgeW">
    <location>
        <begin position="1"/>
        <end position="396"/>
    </location>
</feature>
<feature type="binding site" evidence="1">
    <location>
        <begin position="71"/>
        <end position="74"/>
    </location>
    <ligand>
        <name>carbamoyl phosphate</name>
        <dbReference type="ChEBI" id="CHEBI:58228"/>
    </ligand>
</feature>
<feature type="binding site" evidence="1">
    <location>
        <position position="98"/>
    </location>
    <ligand>
        <name>carbamoyl phosphate</name>
        <dbReference type="ChEBI" id="CHEBI:58228"/>
    </ligand>
</feature>
<feature type="binding site" evidence="1">
    <location>
        <begin position="165"/>
        <end position="168"/>
    </location>
    <ligand>
        <name>carbamoyl phosphate</name>
        <dbReference type="ChEBI" id="CHEBI:58228"/>
    </ligand>
</feature>
<feature type="binding site" evidence="1">
    <location>
        <begin position="330"/>
        <end position="331"/>
    </location>
    <ligand>
        <name>carbamoyl phosphate</name>
        <dbReference type="ChEBI" id="CHEBI:58228"/>
    </ligand>
</feature>
<gene>
    <name type="primary">ygeW</name>
    <name type="ordered locus">c3448</name>
</gene>
<keyword id="KW-1185">Reference proteome</keyword>
<keyword id="KW-0808">Transferase</keyword>
<evidence type="ECO:0000250" key="1">
    <source>
        <dbReference type="UniProtKB" id="P04391"/>
    </source>
</evidence>
<evidence type="ECO:0000250" key="2">
    <source>
        <dbReference type="UniProtKB" id="Q46803"/>
    </source>
</evidence>
<evidence type="ECO:0000305" key="3"/>
<sequence>MMKTVNELIKDINSLTSHLHEKDFLLTWEQTPDELKQVLDVAAALKALRAENISTKVFNSGLGISVFRDNSTRTRFSYASALNLLGLAQQDLDEGKSQIAHGETVRETANMISFCADAIGIRDDMYLGAGNAYMREVGAALDDGYKQGVLPQRPALVNLQCDIDHPTQSMADLAWLREHFGSLENLKGKKIAMTWAYSPSYGKPLSVPQGIIGLMTRFGMDVTLAHPEGYDLIPDVVEVAKNNAKASGGSFRQVTSMEEAFKDADIVYPKSWAPYKVMEERTELLRANDHEGLKALEKQCLAQNAQHKDWHCTEEMMELTRDGEALYMHCLPADISGVSCKEGEVTEGVFEKYRIATYKEASWKPYIIAAMILSRKYAKPGALLEQLLKEAQERVK</sequence>
<organism>
    <name type="scientific">Escherichia coli O6:H1 (strain CFT073 / ATCC 700928 / UPEC)</name>
    <dbReference type="NCBI Taxonomy" id="199310"/>
    <lineage>
        <taxon>Bacteria</taxon>
        <taxon>Pseudomonadati</taxon>
        <taxon>Pseudomonadota</taxon>
        <taxon>Gammaproteobacteria</taxon>
        <taxon>Enterobacterales</taxon>
        <taxon>Enterobacteriaceae</taxon>
        <taxon>Escherichia</taxon>
    </lineage>
</organism>
<name>YGEW_ECOL6</name>
<proteinExistence type="inferred from homology"/>
<comment type="subunit">
    <text evidence="2">Homotrimer.</text>
</comment>
<comment type="similarity">
    <text evidence="3">Belongs to the aspartate/ornithine carbamoyltransferase superfamily.</text>
</comment>
<dbReference type="EC" id="2.1.3.-" evidence="2"/>
<dbReference type="EMBL" id="AE014075">
    <property type="protein sequence ID" value="AAN81893.1"/>
    <property type="molecule type" value="Genomic_DNA"/>
</dbReference>
<dbReference type="SMR" id="Q8FE91"/>
<dbReference type="STRING" id="199310.c3448"/>
<dbReference type="KEGG" id="ecc:c3448"/>
<dbReference type="eggNOG" id="COG0078">
    <property type="taxonomic scope" value="Bacteria"/>
</dbReference>
<dbReference type="HOGENOM" id="CLU_043846_3_3_6"/>
<dbReference type="BioCyc" id="ECOL199310:C3448-MONOMER"/>
<dbReference type="Proteomes" id="UP000001410">
    <property type="component" value="Chromosome"/>
</dbReference>
<dbReference type="GO" id="GO:0016597">
    <property type="term" value="F:amino acid binding"/>
    <property type="evidence" value="ECO:0007669"/>
    <property type="project" value="InterPro"/>
</dbReference>
<dbReference type="GO" id="GO:0004585">
    <property type="term" value="F:ornithine carbamoyltransferase activity"/>
    <property type="evidence" value="ECO:0007669"/>
    <property type="project" value="TreeGrafter"/>
</dbReference>
<dbReference type="GO" id="GO:0042450">
    <property type="term" value="P:arginine biosynthetic process via ornithine"/>
    <property type="evidence" value="ECO:0007669"/>
    <property type="project" value="TreeGrafter"/>
</dbReference>
<dbReference type="GO" id="GO:0019240">
    <property type="term" value="P:citrulline biosynthetic process"/>
    <property type="evidence" value="ECO:0007669"/>
    <property type="project" value="TreeGrafter"/>
</dbReference>
<dbReference type="Gene3D" id="3.40.50.1370">
    <property type="entry name" value="Aspartate/ornithine carbamoyltransferase"/>
    <property type="match status" value="2"/>
</dbReference>
<dbReference type="InterPro" id="IPR006132">
    <property type="entry name" value="Asp/Orn_carbamoyltranf_P-bd"/>
</dbReference>
<dbReference type="InterPro" id="IPR006130">
    <property type="entry name" value="Asp/Orn_carbamoylTrfase"/>
</dbReference>
<dbReference type="InterPro" id="IPR036901">
    <property type="entry name" value="Asp/Orn_carbamoylTrfase_sf"/>
</dbReference>
<dbReference type="InterPro" id="IPR006131">
    <property type="entry name" value="Asp_carbamoyltransf_Asp/Orn-bd"/>
</dbReference>
<dbReference type="InterPro" id="IPR017702">
    <property type="entry name" value="Carbamoyltransferase_YgeW"/>
</dbReference>
<dbReference type="NCBIfam" id="NF005538">
    <property type="entry name" value="PRK07200.1"/>
    <property type="match status" value="1"/>
</dbReference>
<dbReference type="NCBIfam" id="TIGR03316">
    <property type="entry name" value="ygeW"/>
    <property type="match status" value="1"/>
</dbReference>
<dbReference type="PANTHER" id="PTHR45753">
    <property type="entry name" value="ORNITHINE CARBAMOYLTRANSFERASE, MITOCHONDRIAL"/>
    <property type="match status" value="1"/>
</dbReference>
<dbReference type="PANTHER" id="PTHR45753:SF3">
    <property type="entry name" value="ORNITHINE TRANSCARBAMYLASE, MITOCHONDRIAL"/>
    <property type="match status" value="1"/>
</dbReference>
<dbReference type="Pfam" id="PF00185">
    <property type="entry name" value="OTCace"/>
    <property type="match status" value="1"/>
</dbReference>
<dbReference type="Pfam" id="PF02729">
    <property type="entry name" value="OTCace_N"/>
    <property type="match status" value="1"/>
</dbReference>
<dbReference type="PRINTS" id="PR00100">
    <property type="entry name" value="AOTCASE"/>
</dbReference>
<dbReference type="PRINTS" id="PR00101">
    <property type="entry name" value="ATCASE"/>
</dbReference>
<dbReference type="SUPFAM" id="SSF53671">
    <property type="entry name" value="Aspartate/ornithine carbamoyltransferase"/>
    <property type="match status" value="1"/>
</dbReference>
<reference key="1">
    <citation type="journal article" date="2002" name="Proc. Natl. Acad. Sci. U.S.A.">
        <title>Extensive mosaic structure revealed by the complete genome sequence of uropathogenic Escherichia coli.</title>
        <authorList>
            <person name="Welch R.A."/>
            <person name="Burland V."/>
            <person name="Plunkett G. III"/>
            <person name="Redford P."/>
            <person name="Roesch P."/>
            <person name="Rasko D."/>
            <person name="Buckles E.L."/>
            <person name="Liou S.-R."/>
            <person name="Boutin A."/>
            <person name="Hackett J."/>
            <person name="Stroud D."/>
            <person name="Mayhew G.F."/>
            <person name="Rose D.J."/>
            <person name="Zhou S."/>
            <person name="Schwartz D.C."/>
            <person name="Perna N.T."/>
            <person name="Mobley H.L.T."/>
            <person name="Donnenberg M.S."/>
            <person name="Blattner F.R."/>
        </authorList>
    </citation>
    <scope>NUCLEOTIDE SEQUENCE [LARGE SCALE GENOMIC DNA]</scope>
    <source>
        <strain>CFT073 / ATCC 700928 / UPEC</strain>
    </source>
</reference>
<accession>Q8FE91</accession>